<geneLocation type="chloroplast"/>
<proteinExistence type="inferred from homology"/>
<name>PSBM_AMBTC</name>
<dbReference type="EMBL" id="AJ506156">
    <property type="protein sequence ID" value="CAD45101.1"/>
    <property type="molecule type" value="Genomic_DNA"/>
</dbReference>
<dbReference type="RefSeq" id="NP_904093.1">
    <property type="nucleotide sequence ID" value="NC_005086.1"/>
</dbReference>
<dbReference type="SMR" id="Q70Y09"/>
<dbReference type="STRING" id="13333.Q70Y09"/>
<dbReference type="KEGG" id="atr:2597963"/>
<dbReference type="OrthoDB" id="564131at2759"/>
<dbReference type="Proteomes" id="UP000017836">
    <property type="component" value="Chloroplast"/>
</dbReference>
<dbReference type="GO" id="GO:0009535">
    <property type="term" value="C:chloroplast thylakoid membrane"/>
    <property type="evidence" value="ECO:0007669"/>
    <property type="project" value="UniProtKB-SubCell"/>
</dbReference>
<dbReference type="GO" id="GO:0009523">
    <property type="term" value="C:photosystem II"/>
    <property type="evidence" value="ECO:0007669"/>
    <property type="project" value="UniProtKB-KW"/>
</dbReference>
<dbReference type="GO" id="GO:0019684">
    <property type="term" value="P:photosynthesis, light reaction"/>
    <property type="evidence" value="ECO:0007669"/>
    <property type="project" value="InterPro"/>
</dbReference>
<dbReference type="HAMAP" id="MF_00438">
    <property type="entry name" value="PSII_PsbM"/>
    <property type="match status" value="1"/>
</dbReference>
<dbReference type="InterPro" id="IPR007826">
    <property type="entry name" value="PSII_PsbM"/>
</dbReference>
<dbReference type="InterPro" id="IPR037269">
    <property type="entry name" value="PSII_PsbM_sf"/>
</dbReference>
<dbReference type="NCBIfam" id="TIGR03038">
    <property type="entry name" value="PS_II_psbM"/>
    <property type="match status" value="1"/>
</dbReference>
<dbReference type="PANTHER" id="PTHR35774">
    <property type="entry name" value="PHOTOSYSTEM II REACTION CENTER PROTEIN M"/>
    <property type="match status" value="1"/>
</dbReference>
<dbReference type="PANTHER" id="PTHR35774:SF1">
    <property type="entry name" value="PHOTOSYSTEM II REACTION CENTER PROTEIN M"/>
    <property type="match status" value="1"/>
</dbReference>
<dbReference type="Pfam" id="PF05151">
    <property type="entry name" value="PsbM"/>
    <property type="match status" value="1"/>
</dbReference>
<dbReference type="SUPFAM" id="SSF161033">
    <property type="entry name" value="Photosystem II reaction center protein M, PsbM"/>
    <property type="match status" value="1"/>
</dbReference>
<organism>
    <name type="scientific">Amborella trichopoda</name>
    <dbReference type="NCBI Taxonomy" id="13333"/>
    <lineage>
        <taxon>Eukaryota</taxon>
        <taxon>Viridiplantae</taxon>
        <taxon>Streptophyta</taxon>
        <taxon>Embryophyta</taxon>
        <taxon>Tracheophyta</taxon>
        <taxon>Spermatophyta</taxon>
        <taxon>Magnoliopsida</taxon>
        <taxon>Amborellales</taxon>
        <taxon>Amborellaceae</taxon>
        <taxon>Amborella</taxon>
    </lineage>
</organism>
<accession>Q70Y09</accession>
<gene>
    <name evidence="1" type="primary">psbM</name>
</gene>
<comment type="function">
    <text evidence="1">One of the components of the core complex of photosystem II (PSII). PSII is a light-driven water:plastoquinone oxidoreductase that uses light energy to abstract electrons from H(2)O, generating O(2) and a proton gradient subsequently used for ATP formation. It consists of a core antenna complex that captures photons, and an electron transfer chain that converts photonic excitation into a charge separation. This subunit is found at the monomer-monomer interface.</text>
</comment>
<comment type="subunit">
    <text evidence="1">PSII is composed of 1 copy each of membrane proteins PsbA, PsbB, PsbC, PsbD, PsbE, PsbF, PsbH, PsbI, PsbJ, PsbK, PsbL, PsbM, PsbT, PsbX, PsbY, PsbZ, Psb30/Ycf12, at least 3 peripheral proteins of the oxygen-evolving complex and a large number of cofactors. It forms dimeric complexes.</text>
</comment>
<comment type="subcellular location">
    <subcellularLocation>
        <location evidence="1">Plastid</location>
        <location evidence="1">Chloroplast thylakoid membrane</location>
        <topology evidence="1">Single-pass membrane protein</topology>
    </subcellularLocation>
</comment>
<comment type="similarity">
    <text evidence="1">Belongs to the PsbM family.</text>
</comment>
<sequence>MEVNILAFIATALFILVPTAFLLIIYVKTVSQSVE</sequence>
<keyword id="KW-0150">Chloroplast</keyword>
<keyword id="KW-0472">Membrane</keyword>
<keyword id="KW-0602">Photosynthesis</keyword>
<keyword id="KW-0604">Photosystem II</keyword>
<keyword id="KW-0934">Plastid</keyword>
<keyword id="KW-0674">Reaction center</keyword>
<keyword id="KW-1185">Reference proteome</keyword>
<keyword id="KW-0793">Thylakoid</keyword>
<keyword id="KW-0812">Transmembrane</keyword>
<keyword id="KW-1133">Transmembrane helix</keyword>
<evidence type="ECO:0000255" key="1">
    <source>
        <dbReference type="HAMAP-Rule" id="MF_00438"/>
    </source>
</evidence>
<protein>
    <recommendedName>
        <fullName evidence="1">Photosystem II reaction center protein M</fullName>
        <shortName evidence="1">PSII-M</shortName>
    </recommendedName>
</protein>
<reference key="1">
    <citation type="journal article" date="2003" name="Mol. Biol. Evol.">
        <title>Analysis of the Amborella trichopoda chloroplast genome sequence suggests that Amborella is not a basal angiosperm.</title>
        <authorList>
            <person name="Goremykin V.V."/>
            <person name="Hirsch-Ernst K.I."/>
            <person name="Wolfl S."/>
            <person name="Hellwig F.H."/>
        </authorList>
    </citation>
    <scope>NUCLEOTIDE SEQUENCE [LARGE SCALE GENOMIC DNA]</scope>
</reference>
<feature type="chain" id="PRO_0000217546" description="Photosystem II reaction center protein M">
    <location>
        <begin position="1"/>
        <end position="35"/>
    </location>
</feature>
<feature type="transmembrane region" description="Helical" evidence="1">
    <location>
        <begin position="5"/>
        <end position="25"/>
    </location>
</feature>